<protein>
    <recommendedName>
        <fullName>Transcriptional regulatory protein EmbR</fullName>
    </recommendedName>
</protein>
<reference key="1">
    <citation type="journal article" date="2003" name="Proc. Natl. Acad. Sci. U.S.A.">
        <title>The complete genome sequence of Mycobacterium bovis.</title>
        <authorList>
            <person name="Garnier T."/>
            <person name="Eiglmeier K."/>
            <person name="Camus J.-C."/>
            <person name="Medina N."/>
            <person name="Mansoor H."/>
            <person name="Pryor M."/>
            <person name="Duthoy S."/>
            <person name="Grondin S."/>
            <person name="Lacroix C."/>
            <person name="Monsempe C."/>
            <person name="Simon S."/>
            <person name="Harris B."/>
            <person name="Atkin R."/>
            <person name="Doggett J."/>
            <person name="Mayes R."/>
            <person name="Keating L."/>
            <person name="Wheeler P.R."/>
            <person name="Parkhill J."/>
            <person name="Barrell B.G."/>
            <person name="Cole S.T."/>
            <person name="Gordon S.V."/>
            <person name="Hewinson R.G."/>
        </authorList>
    </citation>
    <scope>NUCLEOTIDE SEQUENCE [LARGE SCALE GENOMIC DNA]</scope>
    <source>
        <strain>ATCC BAA-935 / AF2122/97</strain>
    </source>
</reference>
<reference key="2">
    <citation type="journal article" date="2017" name="Genome Announc.">
        <title>Updated reference genome sequence and annotation of Mycobacterium bovis AF2122/97.</title>
        <authorList>
            <person name="Malone K.M."/>
            <person name="Farrell D."/>
            <person name="Stuber T.P."/>
            <person name="Schubert O.T."/>
            <person name="Aebersold R."/>
            <person name="Robbe-Austerman S."/>
            <person name="Gordon S.V."/>
        </authorList>
    </citation>
    <scope>NUCLEOTIDE SEQUENCE [LARGE SCALE GENOMIC DNA]</scope>
    <scope>GENOME REANNOTATION</scope>
    <source>
        <strain>ATCC BAA-935 / AF2122/97</strain>
    </source>
</reference>
<sequence>MAGSATVEKRLDFGLLGPLQMTIDGTPVPSGTPKQRAVLAMLVINRNRPVGVDALITALWEEWPPSGARASIHSYVSNLRKLLGGAGIDPRVVLAAAPPGYRLSIPDNTCDLGRFVAEKTAGVHAAAAGRFEQASRHLSAALREWRGPVLDDLRDFQFVEPFATALVEDKVLAHTAKAEAEIACGRASAVIAELEALTFEHPYREPLWTQLITAYYLSDRQSDALGAYRRVKTTLADDLGIDPGPTLRALNERILRQQPLDAKKSAKTTAAGTVTVLDQRTMASGQQAVAYLHDIASGRGYPLQAAATRIGRLHDNDIVLDSANVSRHHAVIVDTGTNYVINDLRSSNGVHVQHERIRSAVTLNDGDHIRICDHEFTFQISAGTHGGT</sequence>
<proteinExistence type="inferred from homology"/>
<gene>
    <name type="primary">embR</name>
    <name type="ordered locus">BQ2027_MB1298C</name>
</gene>
<keyword id="KW-0238">DNA-binding</keyword>
<keyword id="KW-0597">Phosphoprotein</keyword>
<keyword id="KW-1185">Reference proteome</keyword>
<keyword id="KW-0804">Transcription</keyword>
<keyword id="KW-0805">Transcription regulation</keyword>
<keyword id="KW-0902">Two-component regulatory system</keyword>
<evidence type="ECO:0000250" key="1"/>
<evidence type="ECO:0000255" key="2">
    <source>
        <dbReference type="PROSITE-ProRule" id="PRU00086"/>
    </source>
</evidence>
<evidence type="ECO:0000255" key="3">
    <source>
        <dbReference type="PROSITE-ProRule" id="PRU01091"/>
    </source>
</evidence>
<evidence type="ECO:0000305" key="4"/>
<feature type="chain" id="PRO_0000110009" description="Transcriptional regulatory protein EmbR">
    <location>
        <begin position="1"/>
        <end position="388"/>
    </location>
</feature>
<feature type="domain" description="FHA" evidence="2">
    <location>
        <begin position="308"/>
        <end position="357"/>
    </location>
</feature>
<feature type="DNA-binding region" description="OmpR/PhoB-type" evidence="3">
    <location>
        <begin position="2"/>
        <end position="105"/>
    </location>
</feature>
<organism>
    <name type="scientific">Mycobacterium bovis (strain ATCC BAA-935 / AF2122/97)</name>
    <dbReference type="NCBI Taxonomy" id="233413"/>
    <lineage>
        <taxon>Bacteria</taxon>
        <taxon>Bacillati</taxon>
        <taxon>Actinomycetota</taxon>
        <taxon>Actinomycetes</taxon>
        <taxon>Mycobacteriales</taxon>
        <taxon>Mycobacteriaceae</taxon>
        <taxon>Mycobacterium</taxon>
        <taxon>Mycobacterium tuberculosis complex</taxon>
    </lineage>
</organism>
<name>EMBR_MYCBO</name>
<accession>P66800</accession>
<accession>A0A1R3XXV2</accession>
<accession>Q11052</accession>
<accession>X2BHV0</accession>
<comment type="function">
    <text evidence="1">Positively regulates the transcription of the embCAB operon. Exhibits ATPase and GTPase activities (By similarity).</text>
</comment>
<comment type="domain">
    <text evidence="1">Contains a N-terminal winged-helix DNA-binding domain and a regulatory C-terminal forkhead-associated (FHA) domain, which mediates binding to a Thr-phosphorylated site in the cognate kinase.</text>
</comment>
<comment type="PTM">
    <text evidence="1">Phosphorylated on threonine residue(s).</text>
</comment>
<comment type="similarity">
    <text evidence="4">Belongs to the AfsR/DnrI/RedD regulatory family.</text>
</comment>
<dbReference type="EMBL" id="LT708304">
    <property type="protein sequence ID" value="SIT99901.1"/>
    <property type="molecule type" value="Genomic_DNA"/>
</dbReference>
<dbReference type="RefSeq" id="NP_854952.1">
    <property type="nucleotide sequence ID" value="NC_002945.3"/>
</dbReference>
<dbReference type="RefSeq" id="WP_003406553.1">
    <property type="nucleotide sequence ID" value="NC_002945.4"/>
</dbReference>
<dbReference type="SMR" id="P66800"/>
<dbReference type="GeneID" id="45425239"/>
<dbReference type="KEGG" id="mbo:BQ2027_MB1298C"/>
<dbReference type="PATRIC" id="fig|233413.5.peg.1423"/>
<dbReference type="Proteomes" id="UP000001419">
    <property type="component" value="Chromosome"/>
</dbReference>
<dbReference type="GO" id="GO:0003677">
    <property type="term" value="F:DNA binding"/>
    <property type="evidence" value="ECO:0007669"/>
    <property type="project" value="UniProtKB-KW"/>
</dbReference>
<dbReference type="GO" id="GO:0000160">
    <property type="term" value="P:phosphorelay signal transduction system"/>
    <property type="evidence" value="ECO:0007669"/>
    <property type="project" value="UniProtKB-KW"/>
</dbReference>
<dbReference type="GO" id="GO:0006355">
    <property type="term" value="P:regulation of DNA-templated transcription"/>
    <property type="evidence" value="ECO:0007669"/>
    <property type="project" value="InterPro"/>
</dbReference>
<dbReference type="CDD" id="cd15831">
    <property type="entry name" value="BTAD"/>
    <property type="match status" value="1"/>
</dbReference>
<dbReference type="CDD" id="cd00060">
    <property type="entry name" value="FHA"/>
    <property type="match status" value="1"/>
</dbReference>
<dbReference type="FunFam" id="1.25.40.10:FF:000222">
    <property type="entry name" value="SARP family transcriptional regulator"/>
    <property type="match status" value="1"/>
</dbReference>
<dbReference type="FunFam" id="2.60.200.20:FF:000055">
    <property type="entry name" value="Transcriptional regulator EmbR"/>
    <property type="match status" value="1"/>
</dbReference>
<dbReference type="FunFam" id="1.10.10.10:FF:000528">
    <property type="entry name" value="Transcriptional regulatory protein EmbR"/>
    <property type="match status" value="1"/>
</dbReference>
<dbReference type="Gene3D" id="2.60.200.20">
    <property type="match status" value="1"/>
</dbReference>
<dbReference type="Gene3D" id="1.25.40.10">
    <property type="entry name" value="Tetratricopeptide repeat domain"/>
    <property type="match status" value="1"/>
</dbReference>
<dbReference type="Gene3D" id="1.10.10.10">
    <property type="entry name" value="Winged helix-like DNA-binding domain superfamily/Winged helix DNA-binding domain"/>
    <property type="match status" value="1"/>
</dbReference>
<dbReference type="InterPro" id="IPR051677">
    <property type="entry name" value="AfsR-DnrI-RedD_regulator"/>
</dbReference>
<dbReference type="InterPro" id="IPR005158">
    <property type="entry name" value="BTAD"/>
</dbReference>
<dbReference type="InterPro" id="IPR000253">
    <property type="entry name" value="FHA_dom"/>
</dbReference>
<dbReference type="InterPro" id="IPR001867">
    <property type="entry name" value="OmpR/PhoB-type_DNA-bd"/>
</dbReference>
<dbReference type="InterPro" id="IPR016032">
    <property type="entry name" value="Sig_transdc_resp-reg_C-effctor"/>
</dbReference>
<dbReference type="InterPro" id="IPR008984">
    <property type="entry name" value="SMAD_FHA_dom_sf"/>
</dbReference>
<dbReference type="InterPro" id="IPR011990">
    <property type="entry name" value="TPR-like_helical_dom_sf"/>
</dbReference>
<dbReference type="InterPro" id="IPR036388">
    <property type="entry name" value="WH-like_DNA-bd_sf"/>
</dbReference>
<dbReference type="PANTHER" id="PTHR35807:SF1">
    <property type="entry name" value="TRANSCRIPTIONAL REGULATOR REDD"/>
    <property type="match status" value="1"/>
</dbReference>
<dbReference type="PANTHER" id="PTHR35807">
    <property type="entry name" value="TRANSCRIPTIONAL REGULATOR REDD-RELATED"/>
    <property type="match status" value="1"/>
</dbReference>
<dbReference type="Pfam" id="PF03704">
    <property type="entry name" value="BTAD"/>
    <property type="match status" value="1"/>
</dbReference>
<dbReference type="Pfam" id="PF00498">
    <property type="entry name" value="FHA"/>
    <property type="match status" value="1"/>
</dbReference>
<dbReference type="Pfam" id="PF00486">
    <property type="entry name" value="Trans_reg_C"/>
    <property type="match status" value="1"/>
</dbReference>
<dbReference type="SMART" id="SM01043">
    <property type="entry name" value="BTAD"/>
    <property type="match status" value="1"/>
</dbReference>
<dbReference type="SMART" id="SM00240">
    <property type="entry name" value="FHA"/>
    <property type="match status" value="1"/>
</dbReference>
<dbReference type="SMART" id="SM00862">
    <property type="entry name" value="Trans_reg_C"/>
    <property type="match status" value="1"/>
</dbReference>
<dbReference type="SUPFAM" id="SSF46894">
    <property type="entry name" value="C-terminal effector domain of the bipartite response regulators"/>
    <property type="match status" value="1"/>
</dbReference>
<dbReference type="SUPFAM" id="SSF49879">
    <property type="entry name" value="SMAD/FHA domain"/>
    <property type="match status" value="1"/>
</dbReference>
<dbReference type="SUPFAM" id="SSF48452">
    <property type="entry name" value="TPR-like"/>
    <property type="match status" value="1"/>
</dbReference>
<dbReference type="PROSITE" id="PS50006">
    <property type="entry name" value="FHA_DOMAIN"/>
    <property type="match status" value="1"/>
</dbReference>
<dbReference type="PROSITE" id="PS51755">
    <property type="entry name" value="OMPR_PHOB"/>
    <property type="match status" value="1"/>
</dbReference>